<sequence length="523" mass="56671">MVKINIKSSTDNKFDVDVELGITVADFKKVIATKCSIPADQQRIIYSGRILKDHQTLDEIKIQDGHTVHLVKGAAPPPPPPVEQQVPTPSNTQPQGIPGVPQNINDMMNNPMIQEMFNSRMMDSLLDNPDIFRDMMMGNPEMREVLNNNPEMAQMLSDPRQLRQSLEMMRNPELMREMMRNADRAMINIENHPEGFNLLRRMYTDIQEPLMNAANQQAASQNQTNSNPIQTNTDANPNSQPLPNPWSTNSSSTSSNPTSSSPSSRPTTGSSTNTGASNPWASMFSGGGGGMGGGTNNTGTNNTGSTNNTGASNPWASMFGGGGGGMGGMGGMEGMLGMDPERVQQLLNNPVAQQMMQRLMSDPAMMQQMITMNPQLRQMMDSNPQLREAMNNPEFLNMMTNPENMNAMMQLQQAMGTLRNNGVFPGGMGGMGGMGGMGGMGGMGGMDFSQFGNMFGGMGGMGGMGNNNSSTTRPPVNQEPPEQRFRLQLEQLEELGFVDRAANISALTSTNGNINLAIDRLLR</sequence>
<name>UBQL_DICDI</name>
<dbReference type="EMBL" id="AF214118">
    <property type="protein sequence ID" value="AAF43003.1"/>
    <property type="molecule type" value="mRNA"/>
</dbReference>
<dbReference type="EMBL" id="AAFI02000003">
    <property type="protein sequence ID" value="EAL73179.1"/>
    <property type="molecule type" value="Genomic_DNA"/>
</dbReference>
<dbReference type="RefSeq" id="XP_647439.1">
    <property type="nucleotide sequence ID" value="XM_642347.1"/>
</dbReference>
<dbReference type="SMR" id="Q9NIF3"/>
<dbReference type="FunCoup" id="Q9NIF3">
    <property type="interactions" value="937"/>
</dbReference>
<dbReference type="STRING" id="44689.Q9NIF3"/>
<dbReference type="PaxDb" id="44689-DDB0191158"/>
<dbReference type="EnsemblProtists" id="EAL73179">
    <property type="protein sequence ID" value="EAL73179"/>
    <property type="gene ID" value="DDB_G0267452"/>
</dbReference>
<dbReference type="GeneID" id="8616246"/>
<dbReference type="KEGG" id="ddi:DDB_G0267452"/>
<dbReference type="dictyBase" id="DDB_G0267452">
    <property type="gene designation" value="sonA"/>
</dbReference>
<dbReference type="VEuPathDB" id="AmoebaDB:DDB_G0267452"/>
<dbReference type="eggNOG" id="KOG0010">
    <property type="taxonomic scope" value="Eukaryota"/>
</dbReference>
<dbReference type="HOGENOM" id="CLU_024293_4_0_1"/>
<dbReference type="InParanoid" id="Q9NIF3"/>
<dbReference type="OMA" id="EVRFQTQ"/>
<dbReference type="PhylomeDB" id="Q9NIF3"/>
<dbReference type="Reactome" id="R-DDI-8856825">
    <property type="pathway name" value="Cargo recognition for clathrin-mediated endocytosis"/>
</dbReference>
<dbReference type="PRO" id="PR:Q9NIF3"/>
<dbReference type="Proteomes" id="UP000002195">
    <property type="component" value="Chromosome 1"/>
</dbReference>
<dbReference type="GO" id="GO:0005829">
    <property type="term" value="C:cytosol"/>
    <property type="evidence" value="ECO:0000318"/>
    <property type="project" value="GO_Central"/>
</dbReference>
<dbReference type="GO" id="GO:0045335">
    <property type="term" value="C:phagocytic vesicle"/>
    <property type="evidence" value="ECO:0007005"/>
    <property type="project" value="dictyBase"/>
</dbReference>
<dbReference type="GO" id="GO:0031593">
    <property type="term" value="F:polyubiquitin modification-dependent protein binding"/>
    <property type="evidence" value="ECO:0000318"/>
    <property type="project" value="GO_Central"/>
</dbReference>
<dbReference type="GO" id="GO:0006511">
    <property type="term" value="P:ubiquitin-dependent protein catabolic process"/>
    <property type="evidence" value="ECO:0000318"/>
    <property type="project" value="GO_Central"/>
</dbReference>
<dbReference type="CDD" id="cd14399">
    <property type="entry name" value="UBA_PLICs"/>
    <property type="match status" value="1"/>
</dbReference>
<dbReference type="CDD" id="cd16106">
    <property type="entry name" value="Ubl_Dsk2p_like"/>
    <property type="match status" value="1"/>
</dbReference>
<dbReference type="FunFam" id="1.10.260.100:FF:000001">
    <property type="entry name" value="Ubiquilin 1"/>
    <property type="match status" value="1"/>
</dbReference>
<dbReference type="FunFam" id="1.10.8.10:FF:000079">
    <property type="entry name" value="Ubiquitin family protein"/>
    <property type="match status" value="1"/>
</dbReference>
<dbReference type="Gene3D" id="1.10.260.100">
    <property type="match status" value="1"/>
</dbReference>
<dbReference type="Gene3D" id="1.10.8.10">
    <property type="entry name" value="DNA helicase RuvA subunit, C-terminal domain"/>
    <property type="match status" value="1"/>
</dbReference>
<dbReference type="Gene3D" id="3.10.20.90">
    <property type="entry name" value="Phosphatidylinositol 3-kinase Catalytic Subunit, Chain A, domain 1"/>
    <property type="match status" value="1"/>
</dbReference>
<dbReference type="InterPro" id="IPR006636">
    <property type="entry name" value="STI1_HS-bd"/>
</dbReference>
<dbReference type="InterPro" id="IPR015940">
    <property type="entry name" value="UBA"/>
</dbReference>
<dbReference type="InterPro" id="IPR009060">
    <property type="entry name" value="UBA-like_sf"/>
</dbReference>
<dbReference type="InterPro" id="IPR015496">
    <property type="entry name" value="Ubiquilin"/>
</dbReference>
<dbReference type="InterPro" id="IPR000626">
    <property type="entry name" value="Ubiquitin-like_dom"/>
</dbReference>
<dbReference type="InterPro" id="IPR029071">
    <property type="entry name" value="Ubiquitin-like_domsf"/>
</dbReference>
<dbReference type="InterPro" id="IPR019956">
    <property type="entry name" value="Ubiquitin_dom"/>
</dbReference>
<dbReference type="PANTHER" id="PTHR10677:SF3">
    <property type="entry name" value="FI07626P-RELATED"/>
    <property type="match status" value="1"/>
</dbReference>
<dbReference type="PANTHER" id="PTHR10677">
    <property type="entry name" value="UBIQUILIN"/>
    <property type="match status" value="1"/>
</dbReference>
<dbReference type="Pfam" id="PF00627">
    <property type="entry name" value="UBA"/>
    <property type="match status" value="1"/>
</dbReference>
<dbReference type="Pfam" id="PF00240">
    <property type="entry name" value="ubiquitin"/>
    <property type="match status" value="1"/>
</dbReference>
<dbReference type="Pfam" id="PF23195">
    <property type="entry name" value="UBQLN1"/>
    <property type="match status" value="2"/>
</dbReference>
<dbReference type="PRINTS" id="PR00348">
    <property type="entry name" value="UBIQUITIN"/>
</dbReference>
<dbReference type="SMART" id="SM00727">
    <property type="entry name" value="STI1"/>
    <property type="match status" value="4"/>
</dbReference>
<dbReference type="SMART" id="SM00165">
    <property type="entry name" value="UBA"/>
    <property type="match status" value="1"/>
</dbReference>
<dbReference type="SMART" id="SM00213">
    <property type="entry name" value="UBQ"/>
    <property type="match status" value="1"/>
</dbReference>
<dbReference type="SUPFAM" id="SSF46934">
    <property type="entry name" value="UBA-like"/>
    <property type="match status" value="1"/>
</dbReference>
<dbReference type="SUPFAM" id="SSF54236">
    <property type="entry name" value="Ubiquitin-like"/>
    <property type="match status" value="1"/>
</dbReference>
<dbReference type="PROSITE" id="PS50030">
    <property type="entry name" value="UBA"/>
    <property type="match status" value="1"/>
</dbReference>
<dbReference type="PROSITE" id="PS50053">
    <property type="entry name" value="UBIQUITIN_2"/>
    <property type="match status" value="1"/>
</dbReference>
<feature type="chain" id="PRO_0000327824" description="Ubiquilin">
    <location>
        <begin position="1"/>
        <end position="523"/>
    </location>
</feature>
<feature type="domain" description="Ubiquitin-like" evidence="2">
    <location>
        <begin position="2"/>
        <end position="77"/>
    </location>
</feature>
<feature type="domain" description="STI1 1">
    <location>
        <begin position="100"/>
        <end position="135"/>
    </location>
</feature>
<feature type="domain" description="STI1 2">
    <location>
        <begin position="139"/>
        <end position="178"/>
    </location>
</feature>
<feature type="domain" description="STI1 3">
    <location>
        <begin position="339"/>
        <end position="380"/>
    </location>
</feature>
<feature type="domain" description="STI1 4">
    <location>
        <begin position="383"/>
        <end position="415"/>
    </location>
</feature>
<feature type="domain" description="UBA" evidence="1">
    <location>
        <begin position="480"/>
        <end position="523"/>
    </location>
</feature>
<feature type="region of interest" description="Disordered" evidence="3">
    <location>
        <begin position="70"/>
        <end position="99"/>
    </location>
</feature>
<feature type="region of interest" description="Disordered" evidence="3">
    <location>
        <begin position="215"/>
        <end position="325"/>
    </location>
</feature>
<feature type="compositionally biased region" description="Low complexity" evidence="3">
    <location>
        <begin position="215"/>
        <end position="227"/>
    </location>
</feature>
<feature type="compositionally biased region" description="Polar residues" evidence="3">
    <location>
        <begin position="228"/>
        <end position="241"/>
    </location>
</feature>
<feature type="compositionally biased region" description="Low complexity" evidence="3">
    <location>
        <begin position="245"/>
        <end position="278"/>
    </location>
</feature>
<feature type="compositionally biased region" description="Gly residues" evidence="3">
    <location>
        <begin position="285"/>
        <end position="296"/>
    </location>
</feature>
<feature type="compositionally biased region" description="Low complexity" evidence="3">
    <location>
        <begin position="297"/>
        <end position="310"/>
    </location>
</feature>
<comment type="function">
    <text evidence="4">Stable protein which acts as an antagonist of nosA by repressing cellular differentiation after the tight-aggregate stage, when cells differentiate into two precursor cell types, prespore and prestalk cells, prior to the formation of fruiting bodies.</text>
</comment>
<evidence type="ECO:0000255" key="1">
    <source>
        <dbReference type="PROSITE-ProRule" id="PRU00212"/>
    </source>
</evidence>
<evidence type="ECO:0000255" key="2">
    <source>
        <dbReference type="PROSITE-ProRule" id="PRU00214"/>
    </source>
</evidence>
<evidence type="ECO:0000256" key="3">
    <source>
        <dbReference type="SAM" id="MobiDB-lite"/>
    </source>
</evidence>
<evidence type="ECO:0000269" key="4">
    <source>
    </source>
</evidence>
<proteinExistence type="evidence at protein level"/>
<reference key="1">
    <citation type="journal article" date="2000" name="Biochim. Biophys. Acta">
        <title>A genetic interaction between a ubiquitin-like protein and ubiquitin-mediated proteolysis in Dictyostelium discoideum.</title>
        <authorList>
            <person name="Pukatzki S."/>
            <person name="Ennis H.L."/>
            <person name="Kessin R.H."/>
        </authorList>
    </citation>
    <scope>NUCLEOTIDE SEQUENCE [MRNA]</scope>
    <scope>FUNCTION</scope>
    <source>
        <strain>AX3</strain>
    </source>
</reference>
<reference key="2">
    <citation type="journal article" date="2005" name="Nature">
        <title>The genome of the social amoeba Dictyostelium discoideum.</title>
        <authorList>
            <person name="Eichinger L."/>
            <person name="Pachebat J.A."/>
            <person name="Gloeckner G."/>
            <person name="Rajandream M.A."/>
            <person name="Sucgang R."/>
            <person name="Berriman M."/>
            <person name="Song J."/>
            <person name="Olsen R."/>
            <person name="Szafranski K."/>
            <person name="Xu Q."/>
            <person name="Tunggal B."/>
            <person name="Kummerfeld S."/>
            <person name="Madera M."/>
            <person name="Konfortov B.A."/>
            <person name="Rivero F."/>
            <person name="Bankier A.T."/>
            <person name="Lehmann R."/>
            <person name="Hamlin N."/>
            <person name="Davies R."/>
            <person name="Gaudet P."/>
            <person name="Fey P."/>
            <person name="Pilcher K."/>
            <person name="Chen G."/>
            <person name="Saunders D."/>
            <person name="Sodergren E.J."/>
            <person name="Davis P."/>
            <person name="Kerhornou A."/>
            <person name="Nie X."/>
            <person name="Hall N."/>
            <person name="Anjard C."/>
            <person name="Hemphill L."/>
            <person name="Bason N."/>
            <person name="Farbrother P."/>
            <person name="Desany B."/>
            <person name="Just E."/>
            <person name="Morio T."/>
            <person name="Rost R."/>
            <person name="Churcher C.M."/>
            <person name="Cooper J."/>
            <person name="Haydock S."/>
            <person name="van Driessche N."/>
            <person name="Cronin A."/>
            <person name="Goodhead I."/>
            <person name="Muzny D.M."/>
            <person name="Mourier T."/>
            <person name="Pain A."/>
            <person name="Lu M."/>
            <person name="Harper D."/>
            <person name="Lindsay R."/>
            <person name="Hauser H."/>
            <person name="James K.D."/>
            <person name="Quiles M."/>
            <person name="Madan Babu M."/>
            <person name="Saito T."/>
            <person name="Buchrieser C."/>
            <person name="Wardroper A."/>
            <person name="Felder M."/>
            <person name="Thangavelu M."/>
            <person name="Johnson D."/>
            <person name="Knights A."/>
            <person name="Loulseged H."/>
            <person name="Mungall K.L."/>
            <person name="Oliver K."/>
            <person name="Price C."/>
            <person name="Quail M.A."/>
            <person name="Urushihara H."/>
            <person name="Hernandez J."/>
            <person name="Rabbinowitsch E."/>
            <person name="Steffen D."/>
            <person name="Sanders M."/>
            <person name="Ma J."/>
            <person name="Kohara Y."/>
            <person name="Sharp S."/>
            <person name="Simmonds M.N."/>
            <person name="Spiegler S."/>
            <person name="Tivey A."/>
            <person name="Sugano S."/>
            <person name="White B."/>
            <person name="Walker D."/>
            <person name="Woodward J.R."/>
            <person name="Winckler T."/>
            <person name="Tanaka Y."/>
            <person name="Shaulsky G."/>
            <person name="Schleicher M."/>
            <person name="Weinstock G.M."/>
            <person name="Rosenthal A."/>
            <person name="Cox E.C."/>
            <person name="Chisholm R.L."/>
            <person name="Gibbs R.A."/>
            <person name="Loomis W.F."/>
            <person name="Platzer M."/>
            <person name="Kay R.R."/>
            <person name="Williams J.G."/>
            <person name="Dear P.H."/>
            <person name="Noegel A.A."/>
            <person name="Barrell B.G."/>
            <person name="Kuspa A."/>
        </authorList>
    </citation>
    <scope>NUCLEOTIDE SEQUENCE [LARGE SCALE GENOMIC DNA]</scope>
    <source>
        <strain>AX4</strain>
    </source>
</reference>
<reference key="3">
    <citation type="journal article" date="2006" name="Mol. Cell. Proteomics">
        <title>Proteomics fingerprinting of phagosome maturation and evidence for the role of a Galpha during uptake.</title>
        <authorList>
            <person name="Gotthardt D."/>
            <person name="Blancheteau V."/>
            <person name="Bosserhoff A."/>
            <person name="Ruppert T."/>
            <person name="Delorenzi M."/>
            <person name="Soldati T."/>
        </authorList>
    </citation>
    <scope>IDENTIFICATION BY MASS SPECTROMETRY [LARGE SCALE ANALYSIS]</scope>
    <source>
        <strain>AX2</strain>
    </source>
</reference>
<keyword id="KW-0217">Developmental protein</keyword>
<keyword id="KW-1185">Reference proteome</keyword>
<keyword id="KW-0677">Repeat</keyword>
<organism>
    <name type="scientific">Dictyostelium discoideum</name>
    <name type="common">Social amoeba</name>
    <dbReference type="NCBI Taxonomy" id="44689"/>
    <lineage>
        <taxon>Eukaryota</taxon>
        <taxon>Amoebozoa</taxon>
        <taxon>Evosea</taxon>
        <taxon>Eumycetozoa</taxon>
        <taxon>Dictyostelia</taxon>
        <taxon>Dictyosteliales</taxon>
        <taxon>Dictyosteliaceae</taxon>
        <taxon>Dictyostelium</taxon>
    </lineage>
</organism>
<gene>
    <name type="primary">ubqln</name>
    <name type="synonym">sonA</name>
    <name type="ORF">DDB_G0267452</name>
</gene>
<accession>Q9NIF3</accession>
<accession>Q55FU4</accession>
<protein>
    <recommendedName>
        <fullName>Ubiquilin</fullName>
    </recommendedName>
    <alternativeName>
        <fullName>Suppressor of NosA</fullName>
    </alternativeName>
</protein>